<keyword id="KW-0067">ATP-binding</keyword>
<keyword id="KW-0173">Coenzyme A biosynthesis</keyword>
<keyword id="KW-0963">Cytoplasm</keyword>
<keyword id="KW-0418">Kinase</keyword>
<keyword id="KW-0547">Nucleotide-binding</keyword>
<keyword id="KW-1185">Reference proteome</keyword>
<keyword id="KW-0808">Transferase</keyword>
<dbReference type="EC" id="2.7.1.24" evidence="1"/>
<dbReference type="EMBL" id="BA000019">
    <property type="protein sequence ID" value="BAB73453.1"/>
    <property type="molecule type" value="Genomic_DNA"/>
</dbReference>
<dbReference type="PIR" id="AD2025">
    <property type="entry name" value="AD2025"/>
</dbReference>
<dbReference type="RefSeq" id="WP_010995922.1">
    <property type="nucleotide sequence ID" value="NZ_RSCN01000019.1"/>
</dbReference>
<dbReference type="SMR" id="Q8YW62"/>
<dbReference type="STRING" id="103690.gene:10493772"/>
<dbReference type="KEGG" id="ana:all1754"/>
<dbReference type="eggNOG" id="COG0237">
    <property type="taxonomic scope" value="Bacteria"/>
</dbReference>
<dbReference type="OrthoDB" id="9812943at2"/>
<dbReference type="UniPathway" id="UPA00241">
    <property type="reaction ID" value="UER00356"/>
</dbReference>
<dbReference type="Proteomes" id="UP000002483">
    <property type="component" value="Chromosome"/>
</dbReference>
<dbReference type="GO" id="GO:0005737">
    <property type="term" value="C:cytoplasm"/>
    <property type="evidence" value="ECO:0007669"/>
    <property type="project" value="UniProtKB-SubCell"/>
</dbReference>
<dbReference type="GO" id="GO:0005524">
    <property type="term" value="F:ATP binding"/>
    <property type="evidence" value="ECO:0007669"/>
    <property type="project" value="UniProtKB-UniRule"/>
</dbReference>
<dbReference type="GO" id="GO:0004140">
    <property type="term" value="F:dephospho-CoA kinase activity"/>
    <property type="evidence" value="ECO:0007669"/>
    <property type="project" value="UniProtKB-UniRule"/>
</dbReference>
<dbReference type="GO" id="GO:0015937">
    <property type="term" value="P:coenzyme A biosynthetic process"/>
    <property type="evidence" value="ECO:0007669"/>
    <property type="project" value="UniProtKB-UniRule"/>
</dbReference>
<dbReference type="CDD" id="cd02022">
    <property type="entry name" value="DPCK"/>
    <property type="match status" value="1"/>
</dbReference>
<dbReference type="Gene3D" id="3.40.50.300">
    <property type="entry name" value="P-loop containing nucleotide triphosphate hydrolases"/>
    <property type="match status" value="1"/>
</dbReference>
<dbReference type="HAMAP" id="MF_00376">
    <property type="entry name" value="Dephospho_CoA_kinase"/>
    <property type="match status" value="1"/>
</dbReference>
<dbReference type="InterPro" id="IPR001977">
    <property type="entry name" value="Depp_CoAkinase"/>
</dbReference>
<dbReference type="InterPro" id="IPR027417">
    <property type="entry name" value="P-loop_NTPase"/>
</dbReference>
<dbReference type="NCBIfam" id="TIGR00152">
    <property type="entry name" value="dephospho-CoA kinase"/>
    <property type="match status" value="1"/>
</dbReference>
<dbReference type="PANTHER" id="PTHR10695:SF46">
    <property type="entry name" value="BIFUNCTIONAL COENZYME A SYNTHASE-RELATED"/>
    <property type="match status" value="1"/>
</dbReference>
<dbReference type="PANTHER" id="PTHR10695">
    <property type="entry name" value="DEPHOSPHO-COA KINASE-RELATED"/>
    <property type="match status" value="1"/>
</dbReference>
<dbReference type="Pfam" id="PF01121">
    <property type="entry name" value="CoaE"/>
    <property type="match status" value="1"/>
</dbReference>
<dbReference type="SUPFAM" id="SSF52540">
    <property type="entry name" value="P-loop containing nucleoside triphosphate hydrolases"/>
    <property type="match status" value="1"/>
</dbReference>
<dbReference type="PROSITE" id="PS51219">
    <property type="entry name" value="DPCK"/>
    <property type="match status" value="1"/>
</dbReference>
<organism>
    <name type="scientific">Nostoc sp. (strain PCC 7120 / SAG 25.82 / UTEX 2576)</name>
    <dbReference type="NCBI Taxonomy" id="103690"/>
    <lineage>
        <taxon>Bacteria</taxon>
        <taxon>Bacillati</taxon>
        <taxon>Cyanobacteriota</taxon>
        <taxon>Cyanophyceae</taxon>
        <taxon>Nostocales</taxon>
        <taxon>Nostocaceae</taxon>
        <taxon>Nostoc</taxon>
    </lineage>
</organism>
<name>COAE_NOSS1</name>
<sequence length="196" mass="21826">MTQRIIGLTGGIATGKTTVANYLASAHNLPIFDADIYARDAVSLGSPILDAIARRYGKEILLPDGSLNRPKLGEMIFQNQDQRHWVESLIHPYVRDRFLKAIAESTSPILVLVIPLLIEVQMTNLVTEIWVVICSESQQLQRLMERNHLTLEQAQARINSQLSLKEKAAIADVVLDNSSSLDALLKQVDIALNFEL</sequence>
<accession>Q8YW62</accession>
<feature type="chain" id="PRO_0000172899" description="Dephospho-CoA kinase">
    <location>
        <begin position="1"/>
        <end position="196"/>
    </location>
</feature>
<feature type="domain" description="DPCK" evidence="1">
    <location>
        <begin position="5"/>
        <end position="196"/>
    </location>
</feature>
<feature type="binding site" evidence="1">
    <location>
        <begin position="13"/>
        <end position="18"/>
    </location>
    <ligand>
        <name>ATP</name>
        <dbReference type="ChEBI" id="CHEBI:30616"/>
    </ligand>
</feature>
<comment type="function">
    <text evidence="1">Catalyzes the phosphorylation of the 3'-hydroxyl group of dephosphocoenzyme A to form coenzyme A.</text>
</comment>
<comment type="catalytic activity">
    <reaction evidence="1">
        <text>3'-dephospho-CoA + ATP = ADP + CoA + H(+)</text>
        <dbReference type="Rhea" id="RHEA:18245"/>
        <dbReference type="ChEBI" id="CHEBI:15378"/>
        <dbReference type="ChEBI" id="CHEBI:30616"/>
        <dbReference type="ChEBI" id="CHEBI:57287"/>
        <dbReference type="ChEBI" id="CHEBI:57328"/>
        <dbReference type="ChEBI" id="CHEBI:456216"/>
        <dbReference type="EC" id="2.7.1.24"/>
    </reaction>
</comment>
<comment type="pathway">
    <text evidence="1">Cofactor biosynthesis; coenzyme A biosynthesis; CoA from (R)-pantothenate: step 5/5.</text>
</comment>
<comment type="subcellular location">
    <subcellularLocation>
        <location evidence="1">Cytoplasm</location>
    </subcellularLocation>
</comment>
<comment type="similarity">
    <text evidence="1">Belongs to the CoaE family.</text>
</comment>
<protein>
    <recommendedName>
        <fullName evidence="1">Dephospho-CoA kinase</fullName>
        <ecNumber evidence="1">2.7.1.24</ecNumber>
    </recommendedName>
    <alternativeName>
        <fullName evidence="1">Dephosphocoenzyme A kinase</fullName>
    </alternativeName>
</protein>
<reference key="1">
    <citation type="journal article" date="2001" name="DNA Res.">
        <title>Complete genomic sequence of the filamentous nitrogen-fixing cyanobacterium Anabaena sp. strain PCC 7120.</title>
        <authorList>
            <person name="Kaneko T."/>
            <person name="Nakamura Y."/>
            <person name="Wolk C.P."/>
            <person name="Kuritz T."/>
            <person name="Sasamoto S."/>
            <person name="Watanabe A."/>
            <person name="Iriguchi M."/>
            <person name="Ishikawa A."/>
            <person name="Kawashima K."/>
            <person name="Kimura T."/>
            <person name="Kishida Y."/>
            <person name="Kohara M."/>
            <person name="Matsumoto M."/>
            <person name="Matsuno A."/>
            <person name="Muraki A."/>
            <person name="Nakazaki N."/>
            <person name="Shimpo S."/>
            <person name="Sugimoto M."/>
            <person name="Takazawa M."/>
            <person name="Yamada M."/>
            <person name="Yasuda M."/>
            <person name="Tabata S."/>
        </authorList>
    </citation>
    <scope>NUCLEOTIDE SEQUENCE [LARGE SCALE GENOMIC DNA]</scope>
    <source>
        <strain>PCC 7120 / SAG 25.82 / UTEX 2576</strain>
    </source>
</reference>
<evidence type="ECO:0000255" key="1">
    <source>
        <dbReference type="HAMAP-Rule" id="MF_00376"/>
    </source>
</evidence>
<proteinExistence type="inferred from homology"/>
<gene>
    <name evidence="1" type="primary">coaE</name>
    <name type="ordered locus">all1754</name>
</gene>